<organism>
    <name type="scientific">Gluconacetobacter diazotrophicus (strain ATCC 49037 / DSM 5601 / CCUG 37298 / CIP 103539 / LMG 7603 / PAl5)</name>
    <dbReference type="NCBI Taxonomy" id="272568"/>
    <lineage>
        <taxon>Bacteria</taxon>
        <taxon>Pseudomonadati</taxon>
        <taxon>Pseudomonadota</taxon>
        <taxon>Alphaproteobacteria</taxon>
        <taxon>Acetobacterales</taxon>
        <taxon>Acetobacteraceae</taxon>
        <taxon>Gluconacetobacter</taxon>
    </lineage>
</organism>
<name>NUOB1_GLUDA</name>
<accession>A9HN98</accession>
<reference key="1">
    <citation type="journal article" date="2009" name="BMC Genomics">
        <title>Complete genome sequence of the sugarcane nitrogen-fixing endophyte Gluconacetobacter diazotrophicus Pal5.</title>
        <authorList>
            <person name="Bertalan M."/>
            <person name="Albano R."/>
            <person name="de Padua V."/>
            <person name="Rouws L."/>
            <person name="Rojas C."/>
            <person name="Hemerly A."/>
            <person name="Teixeira K."/>
            <person name="Schwab S."/>
            <person name="Araujo J."/>
            <person name="Oliveira A."/>
            <person name="Franca L."/>
            <person name="Magalhaes V."/>
            <person name="Alqueres S."/>
            <person name="Cardoso A."/>
            <person name="Almeida W."/>
            <person name="Loureiro M.M."/>
            <person name="Nogueira E."/>
            <person name="Cidade D."/>
            <person name="Oliveira D."/>
            <person name="Simao T."/>
            <person name="Macedo J."/>
            <person name="Valadao A."/>
            <person name="Dreschsel M."/>
            <person name="Freitas F."/>
            <person name="Vidal M."/>
            <person name="Guedes H."/>
            <person name="Rodrigues E."/>
            <person name="Meneses C."/>
            <person name="Brioso P."/>
            <person name="Pozzer L."/>
            <person name="Figueiredo D."/>
            <person name="Montano H."/>
            <person name="Junior J."/>
            <person name="de Souza Filho G."/>
            <person name="Martin Quintana Flores V."/>
            <person name="Ferreira B."/>
            <person name="Branco A."/>
            <person name="Gonzalez P."/>
            <person name="Guillobel H."/>
            <person name="Lemos M."/>
            <person name="Seibel L."/>
            <person name="Macedo J."/>
            <person name="Alves-Ferreira M."/>
            <person name="Sachetto-Martins G."/>
            <person name="Coelho A."/>
            <person name="Santos E."/>
            <person name="Amaral G."/>
            <person name="Neves A."/>
            <person name="Pacheco A.B."/>
            <person name="Carvalho D."/>
            <person name="Lery L."/>
            <person name="Bisch P."/>
            <person name="Rossle S.C."/>
            <person name="Urmenyi T."/>
            <person name="Rael Pereira A."/>
            <person name="Silva R."/>
            <person name="Rondinelli E."/>
            <person name="von Kruger W."/>
            <person name="Martins O."/>
            <person name="Baldani J.I."/>
            <person name="Ferreira P.C."/>
        </authorList>
    </citation>
    <scope>NUCLEOTIDE SEQUENCE [LARGE SCALE GENOMIC DNA]</scope>
    <source>
        <strain>ATCC 49037 / DSM 5601 / CCUG 37298 / CIP 103539 / LMG 7603 / PAl5</strain>
    </source>
</reference>
<reference key="2">
    <citation type="journal article" date="2010" name="Stand. Genomic Sci.">
        <title>Two genome sequences of the same bacterial strain, Gluconacetobacter diazotrophicus PAl 5, suggest a new standard in genome sequence submission.</title>
        <authorList>
            <person name="Giongo A."/>
            <person name="Tyler H.L."/>
            <person name="Zipperer U.N."/>
            <person name="Triplett E.W."/>
        </authorList>
    </citation>
    <scope>NUCLEOTIDE SEQUENCE [LARGE SCALE GENOMIC DNA]</scope>
    <source>
        <strain>ATCC 49037 / DSM 5601 / CCUG 37298 / CIP 103539 / LMG 7603 / PAl5</strain>
    </source>
</reference>
<sequence>MRWSLTRPGEEPGTPRDATMTETVKRNLVMGRLQDFVSWGQKNSIWPFNFGLSCCYVEMATAFTSKYDIARFGSEVLRATPREADLIVISGTVFVKMAPIVKYLYDQMLEPRWVISMGSCANSGGMYDIYSVVQGVDSFLPVDVYVPGCPPRPDALLEGLMLLQDSVGTQRRPLSWMVGPQGVERVTPPSLRDAKRDQRRAAQTLRSPDTI</sequence>
<dbReference type="EC" id="7.1.1.-" evidence="1"/>
<dbReference type="EMBL" id="CP001189">
    <property type="protein sequence ID" value="ACI50507.1"/>
    <property type="molecule type" value="Genomic_DNA"/>
</dbReference>
<dbReference type="EMBL" id="AM889285">
    <property type="protein sequence ID" value="CAP56413.1"/>
    <property type="molecule type" value="Genomic_DNA"/>
</dbReference>
<dbReference type="RefSeq" id="WP_012226477.1">
    <property type="nucleotide sequence ID" value="NC_010125.1"/>
</dbReference>
<dbReference type="SMR" id="A9HN98"/>
<dbReference type="STRING" id="272568.GDI2470"/>
<dbReference type="KEGG" id="gdi:GDI2470"/>
<dbReference type="KEGG" id="gdj:Gdia_0717"/>
<dbReference type="eggNOG" id="COG0377">
    <property type="taxonomic scope" value="Bacteria"/>
</dbReference>
<dbReference type="HOGENOM" id="CLU_055737_7_3_5"/>
<dbReference type="OrthoDB" id="9786737at2"/>
<dbReference type="Proteomes" id="UP000001176">
    <property type="component" value="Chromosome"/>
</dbReference>
<dbReference type="GO" id="GO:0005886">
    <property type="term" value="C:plasma membrane"/>
    <property type="evidence" value="ECO:0007669"/>
    <property type="project" value="UniProtKB-SubCell"/>
</dbReference>
<dbReference type="GO" id="GO:0045271">
    <property type="term" value="C:respiratory chain complex I"/>
    <property type="evidence" value="ECO:0007669"/>
    <property type="project" value="TreeGrafter"/>
</dbReference>
<dbReference type="GO" id="GO:0051539">
    <property type="term" value="F:4 iron, 4 sulfur cluster binding"/>
    <property type="evidence" value="ECO:0007669"/>
    <property type="project" value="UniProtKB-KW"/>
</dbReference>
<dbReference type="GO" id="GO:0005506">
    <property type="term" value="F:iron ion binding"/>
    <property type="evidence" value="ECO:0007669"/>
    <property type="project" value="UniProtKB-UniRule"/>
</dbReference>
<dbReference type="GO" id="GO:0008137">
    <property type="term" value="F:NADH dehydrogenase (ubiquinone) activity"/>
    <property type="evidence" value="ECO:0007669"/>
    <property type="project" value="InterPro"/>
</dbReference>
<dbReference type="GO" id="GO:0050136">
    <property type="term" value="F:NADH:ubiquinone reductase (non-electrogenic) activity"/>
    <property type="evidence" value="ECO:0007669"/>
    <property type="project" value="UniProtKB-UniRule"/>
</dbReference>
<dbReference type="GO" id="GO:0048038">
    <property type="term" value="F:quinone binding"/>
    <property type="evidence" value="ECO:0007669"/>
    <property type="project" value="UniProtKB-KW"/>
</dbReference>
<dbReference type="GO" id="GO:0009060">
    <property type="term" value="P:aerobic respiration"/>
    <property type="evidence" value="ECO:0007669"/>
    <property type="project" value="TreeGrafter"/>
</dbReference>
<dbReference type="GO" id="GO:0015990">
    <property type="term" value="P:electron transport coupled proton transport"/>
    <property type="evidence" value="ECO:0007669"/>
    <property type="project" value="TreeGrafter"/>
</dbReference>
<dbReference type="FunFam" id="3.40.50.12280:FF:000002">
    <property type="entry name" value="NADH-quinone oxidoreductase subunit B"/>
    <property type="match status" value="1"/>
</dbReference>
<dbReference type="Gene3D" id="3.40.50.12280">
    <property type="match status" value="1"/>
</dbReference>
<dbReference type="HAMAP" id="MF_01356">
    <property type="entry name" value="NDH1_NuoB"/>
    <property type="match status" value="1"/>
</dbReference>
<dbReference type="InterPro" id="IPR006137">
    <property type="entry name" value="NADH_UbQ_OxRdtase-like_20kDa"/>
</dbReference>
<dbReference type="InterPro" id="IPR006138">
    <property type="entry name" value="NADH_UQ_OxRdtase_20Kd_su"/>
</dbReference>
<dbReference type="NCBIfam" id="TIGR01957">
    <property type="entry name" value="nuoB_fam"/>
    <property type="match status" value="1"/>
</dbReference>
<dbReference type="NCBIfam" id="NF005012">
    <property type="entry name" value="PRK06411.1"/>
    <property type="match status" value="1"/>
</dbReference>
<dbReference type="PANTHER" id="PTHR11995">
    <property type="entry name" value="NADH DEHYDROGENASE"/>
    <property type="match status" value="1"/>
</dbReference>
<dbReference type="PANTHER" id="PTHR11995:SF14">
    <property type="entry name" value="NADH DEHYDROGENASE [UBIQUINONE] IRON-SULFUR PROTEIN 7, MITOCHONDRIAL"/>
    <property type="match status" value="1"/>
</dbReference>
<dbReference type="Pfam" id="PF01058">
    <property type="entry name" value="Oxidored_q6"/>
    <property type="match status" value="1"/>
</dbReference>
<dbReference type="SUPFAM" id="SSF56770">
    <property type="entry name" value="HydA/Nqo6-like"/>
    <property type="match status" value="1"/>
</dbReference>
<dbReference type="PROSITE" id="PS01150">
    <property type="entry name" value="COMPLEX1_20K"/>
    <property type="match status" value="1"/>
</dbReference>
<evidence type="ECO:0000255" key="1">
    <source>
        <dbReference type="HAMAP-Rule" id="MF_01356"/>
    </source>
</evidence>
<evidence type="ECO:0000256" key="2">
    <source>
        <dbReference type="SAM" id="MobiDB-lite"/>
    </source>
</evidence>
<gene>
    <name evidence="1" type="primary">nuoB1</name>
    <name type="ordered locus">GDI2470</name>
    <name type="ordered locus">Gdia_0717</name>
</gene>
<feature type="chain" id="PRO_0000376244" description="NADH-quinone oxidoreductase subunit B 1">
    <location>
        <begin position="1"/>
        <end position="211"/>
    </location>
</feature>
<feature type="region of interest" description="Disordered" evidence="2">
    <location>
        <begin position="187"/>
        <end position="211"/>
    </location>
</feature>
<feature type="binding site" evidence="1">
    <location>
        <position position="54"/>
    </location>
    <ligand>
        <name>[4Fe-4S] cluster</name>
        <dbReference type="ChEBI" id="CHEBI:49883"/>
    </ligand>
</feature>
<feature type="binding site" evidence="1">
    <location>
        <position position="55"/>
    </location>
    <ligand>
        <name>[4Fe-4S] cluster</name>
        <dbReference type="ChEBI" id="CHEBI:49883"/>
    </ligand>
</feature>
<feature type="binding site" evidence="1">
    <location>
        <position position="120"/>
    </location>
    <ligand>
        <name>[4Fe-4S] cluster</name>
        <dbReference type="ChEBI" id="CHEBI:49883"/>
    </ligand>
</feature>
<feature type="binding site" evidence="1">
    <location>
        <position position="149"/>
    </location>
    <ligand>
        <name>[4Fe-4S] cluster</name>
        <dbReference type="ChEBI" id="CHEBI:49883"/>
    </ligand>
</feature>
<comment type="function">
    <text evidence="1">NDH-1 shuttles electrons from NADH, via FMN and iron-sulfur (Fe-S) centers, to quinones in the respiratory chain. The immediate electron acceptor for the enzyme in this species is believed to be ubiquinone. Couples the redox reaction to proton translocation (for every two electrons transferred, four hydrogen ions are translocated across the cytoplasmic membrane), and thus conserves the redox energy in a proton gradient.</text>
</comment>
<comment type="catalytic activity">
    <reaction evidence="1">
        <text>a quinone + NADH + 5 H(+)(in) = a quinol + NAD(+) + 4 H(+)(out)</text>
        <dbReference type="Rhea" id="RHEA:57888"/>
        <dbReference type="ChEBI" id="CHEBI:15378"/>
        <dbReference type="ChEBI" id="CHEBI:24646"/>
        <dbReference type="ChEBI" id="CHEBI:57540"/>
        <dbReference type="ChEBI" id="CHEBI:57945"/>
        <dbReference type="ChEBI" id="CHEBI:132124"/>
    </reaction>
</comment>
<comment type="cofactor">
    <cofactor evidence="1">
        <name>[4Fe-4S] cluster</name>
        <dbReference type="ChEBI" id="CHEBI:49883"/>
    </cofactor>
    <text evidence="1">Binds 1 [4Fe-4S] cluster.</text>
</comment>
<comment type="subunit">
    <text evidence="1">NDH-1 is composed of 14 different subunits. Subunits NuoB, C, D, E, F, and G constitute the peripheral sector of the complex.</text>
</comment>
<comment type="subcellular location">
    <subcellularLocation>
        <location evidence="1">Cell inner membrane</location>
        <topology evidence="1">Peripheral membrane protein</topology>
        <orientation evidence="1">Cytoplasmic side</orientation>
    </subcellularLocation>
</comment>
<comment type="similarity">
    <text evidence="1">Belongs to the complex I 20 kDa subunit family.</text>
</comment>
<keyword id="KW-0004">4Fe-4S</keyword>
<keyword id="KW-0997">Cell inner membrane</keyword>
<keyword id="KW-1003">Cell membrane</keyword>
<keyword id="KW-0408">Iron</keyword>
<keyword id="KW-0411">Iron-sulfur</keyword>
<keyword id="KW-0472">Membrane</keyword>
<keyword id="KW-0479">Metal-binding</keyword>
<keyword id="KW-0520">NAD</keyword>
<keyword id="KW-0874">Quinone</keyword>
<keyword id="KW-1185">Reference proteome</keyword>
<keyword id="KW-1278">Translocase</keyword>
<keyword id="KW-0813">Transport</keyword>
<keyword id="KW-0830">Ubiquinone</keyword>
<proteinExistence type="inferred from homology"/>
<protein>
    <recommendedName>
        <fullName evidence="1">NADH-quinone oxidoreductase subunit B 1</fullName>
        <ecNumber evidence="1">7.1.1.-</ecNumber>
    </recommendedName>
    <alternativeName>
        <fullName evidence="1">NADH dehydrogenase I subunit B 1</fullName>
    </alternativeName>
    <alternativeName>
        <fullName evidence="1">NDH-1 subunit B 1</fullName>
    </alternativeName>
</protein>